<protein>
    <recommendedName>
        <fullName evidence="1">S-adenosylmethionine synthase</fullName>
        <shortName evidence="1">AdoMet synthase</shortName>
        <ecNumber evidence="1">2.5.1.6</ecNumber>
    </recommendedName>
    <alternativeName>
        <fullName evidence="1">MAT</fullName>
    </alternativeName>
    <alternativeName>
        <fullName evidence="1">Methionine adenosyltransferase</fullName>
    </alternativeName>
</protein>
<sequence>MSKGRLFTSESVTEGHPDKICDAISDSVLDSLLAQDPRSRVAVETLVTTGQVHVVGEVTTSAKEAFADITNTVRHRILEVGYDSSDKGFDGTTCGVNIGIGAQSPDIAQGVDTAHETRVEGAGDPLDLQGAGDQGLMFGYAIKDTPELMPLPIALAHRLARRLTEVRKNGVLDYLRPDGKTQVTVQYDGVTPVRLDTVVLSTQHAEGIDLEGTLTPDIREKVVNTVLSDLNHDSMDTSDFRLLVNPTGKFVLGGPMGDAGLTGRKIIVDTYGGWARHGGGAFSGKDPSKVDRSAAYAMRWVAKNVVAAGLADRVEVQVAYAIGKAAPVGLFVETFGTETVDPAKIEKAITEVFDLRPGAIVRDLDLLRPIYAPTAAYGHFGRTDIDLPWERTDKADALKTAV</sequence>
<accession>A1UFL0</accession>
<gene>
    <name evidence="1" type="primary">metK</name>
    <name type="ordered locus">Mkms_2420</name>
</gene>
<dbReference type="EC" id="2.5.1.6" evidence="1"/>
<dbReference type="EMBL" id="CP000518">
    <property type="protein sequence ID" value="ABL91618.1"/>
    <property type="molecule type" value="Genomic_DNA"/>
</dbReference>
<dbReference type="SMR" id="A1UFL0"/>
<dbReference type="STRING" id="189918.Mkms_2420"/>
<dbReference type="KEGG" id="mkm:Mkms_2420"/>
<dbReference type="HOGENOM" id="CLU_041802_1_1_11"/>
<dbReference type="OrthoDB" id="9801686at2"/>
<dbReference type="UniPathway" id="UPA00315">
    <property type="reaction ID" value="UER00080"/>
</dbReference>
<dbReference type="GO" id="GO:0005737">
    <property type="term" value="C:cytoplasm"/>
    <property type="evidence" value="ECO:0007669"/>
    <property type="project" value="UniProtKB-SubCell"/>
</dbReference>
<dbReference type="GO" id="GO:0005524">
    <property type="term" value="F:ATP binding"/>
    <property type="evidence" value="ECO:0007669"/>
    <property type="project" value="UniProtKB-UniRule"/>
</dbReference>
<dbReference type="GO" id="GO:0000287">
    <property type="term" value="F:magnesium ion binding"/>
    <property type="evidence" value="ECO:0007669"/>
    <property type="project" value="UniProtKB-UniRule"/>
</dbReference>
<dbReference type="GO" id="GO:0004478">
    <property type="term" value="F:methionine adenosyltransferase activity"/>
    <property type="evidence" value="ECO:0007669"/>
    <property type="project" value="UniProtKB-UniRule"/>
</dbReference>
<dbReference type="GO" id="GO:0006730">
    <property type="term" value="P:one-carbon metabolic process"/>
    <property type="evidence" value="ECO:0007669"/>
    <property type="project" value="UniProtKB-KW"/>
</dbReference>
<dbReference type="GO" id="GO:0006556">
    <property type="term" value="P:S-adenosylmethionine biosynthetic process"/>
    <property type="evidence" value="ECO:0007669"/>
    <property type="project" value="UniProtKB-UniRule"/>
</dbReference>
<dbReference type="CDD" id="cd18079">
    <property type="entry name" value="S-AdoMet_synt"/>
    <property type="match status" value="1"/>
</dbReference>
<dbReference type="FunFam" id="3.30.300.10:FF:000006">
    <property type="entry name" value="S-adenosylmethionine synthase"/>
    <property type="match status" value="1"/>
</dbReference>
<dbReference type="Gene3D" id="3.30.300.10">
    <property type="match status" value="3"/>
</dbReference>
<dbReference type="HAMAP" id="MF_00086">
    <property type="entry name" value="S_AdoMet_synth1"/>
    <property type="match status" value="1"/>
</dbReference>
<dbReference type="InterPro" id="IPR022631">
    <property type="entry name" value="ADOMET_SYNTHASE_CS"/>
</dbReference>
<dbReference type="InterPro" id="IPR022630">
    <property type="entry name" value="S-AdoMet_synt_C"/>
</dbReference>
<dbReference type="InterPro" id="IPR022629">
    <property type="entry name" value="S-AdoMet_synt_central"/>
</dbReference>
<dbReference type="InterPro" id="IPR022628">
    <property type="entry name" value="S-AdoMet_synt_N"/>
</dbReference>
<dbReference type="InterPro" id="IPR002133">
    <property type="entry name" value="S-AdoMet_synthetase"/>
</dbReference>
<dbReference type="InterPro" id="IPR022636">
    <property type="entry name" value="S-AdoMet_synthetase_sfam"/>
</dbReference>
<dbReference type="NCBIfam" id="TIGR01034">
    <property type="entry name" value="metK"/>
    <property type="match status" value="1"/>
</dbReference>
<dbReference type="PANTHER" id="PTHR11964">
    <property type="entry name" value="S-ADENOSYLMETHIONINE SYNTHETASE"/>
    <property type="match status" value="1"/>
</dbReference>
<dbReference type="Pfam" id="PF02773">
    <property type="entry name" value="S-AdoMet_synt_C"/>
    <property type="match status" value="1"/>
</dbReference>
<dbReference type="Pfam" id="PF02772">
    <property type="entry name" value="S-AdoMet_synt_M"/>
    <property type="match status" value="1"/>
</dbReference>
<dbReference type="Pfam" id="PF00438">
    <property type="entry name" value="S-AdoMet_synt_N"/>
    <property type="match status" value="1"/>
</dbReference>
<dbReference type="PIRSF" id="PIRSF000497">
    <property type="entry name" value="MAT"/>
    <property type="match status" value="1"/>
</dbReference>
<dbReference type="SUPFAM" id="SSF55973">
    <property type="entry name" value="S-adenosylmethionine synthetase"/>
    <property type="match status" value="3"/>
</dbReference>
<dbReference type="PROSITE" id="PS00376">
    <property type="entry name" value="ADOMET_SYNTHASE_1"/>
    <property type="match status" value="1"/>
</dbReference>
<dbReference type="PROSITE" id="PS00377">
    <property type="entry name" value="ADOMET_SYNTHASE_2"/>
    <property type="match status" value="1"/>
</dbReference>
<organism>
    <name type="scientific">Mycobacterium sp. (strain KMS)</name>
    <dbReference type="NCBI Taxonomy" id="189918"/>
    <lineage>
        <taxon>Bacteria</taxon>
        <taxon>Bacillati</taxon>
        <taxon>Actinomycetota</taxon>
        <taxon>Actinomycetes</taxon>
        <taxon>Mycobacteriales</taxon>
        <taxon>Mycobacteriaceae</taxon>
        <taxon>Mycobacterium</taxon>
    </lineage>
</organism>
<keyword id="KW-0067">ATP-binding</keyword>
<keyword id="KW-0963">Cytoplasm</keyword>
<keyword id="KW-0460">Magnesium</keyword>
<keyword id="KW-0479">Metal-binding</keyword>
<keyword id="KW-0547">Nucleotide-binding</keyword>
<keyword id="KW-0554">One-carbon metabolism</keyword>
<keyword id="KW-0630">Potassium</keyword>
<keyword id="KW-0808">Transferase</keyword>
<reference key="1">
    <citation type="submission" date="2006-12" db="EMBL/GenBank/DDBJ databases">
        <title>Complete sequence of chromosome of Mycobacterium sp. KMS.</title>
        <authorList>
            <consortium name="US DOE Joint Genome Institute"/>
            <person name="Copeland A."/>
            <person name="Lucas S."/>
            <person name="Lapidus A."/>
            <person name="Barry K."/>
            <person name="Detter J.C."/>
            <person name="Glavina del Rio T."/>
            <person name="Hammon N."/>
            <person name="Israni S."/>
            <person name="Dalin E."/>
            <person name="Tice H."/>
            <person name="Pitluck S."/>
            <person name="Kiss H."/>
            <person name="Brettin T."/>
            <person name="Bruce D."/>
            <person name="Han C."/>
            <person name="Tapia R."/>
            <person name="Gilna P."/>
            <person name="Schmutz J."/>
            <person name="Larimer F."/>
            <person name="Land M."/>
            <person name="Hauser L."/>
            <person name="Kyrpides N."/>
            <person name="Mikhailova N."/>
            <person name="Miller C.D."/>
            <person name="Richardson P."/>
        </authorList>
    </citation>
    <scope>NUCLEOTIDE SEQUENCE [LARGE SCALE GENOMIC DNA]</scope>
    <source>
        <strain>KMS</strain>
    </source>
</reference>
<feature type="chain" id="PRO_0000302943" description="S-adenosylmethionine synthase">
    <location>
        <begin position="1"/>
        <end position="402"/>
    </location>
</feature>
<feature type="region of interest" description="Flexible loop" evidence="1">
    <location>
        <begin position="103"/>
        <end position="113"/>
    </location>
</feature>
<feature type="binding site" description="in other chain" evidence="1">
    <location>
        <position position="16"/>
    </location>
    <ligand>
        <name>ATP</name>
        <dbReference type="ChEBI" id="CHEBI:30616"/>
        <note>ligand shared between two neighboring subunits</note>
    </ligand>
</feature>
<feature type="binding site" evidence="1">
    <location>
        <position position="18"/>
    </location>
    <ligand>
        <name>Mg(2+)</name>
        <dbReference type="ChEBI" id="CHEBI:18420"/>
    </ligand>
</feature>
<feature type="binding site" evidence="1">
    <location>
        <position position="44"/>
    </location>
    <ligand>
        <name>K(+)</name>
        <dbReference type="ChEBI" id="CHEBI:29103"/>
    </ligand>
</feature>
<feature type="binding site" description="in other chain" evidence="1">
    <location>
        <position position="57"/>
    </location>
    <ligand>
        <name>L-methionine</name>
        <dbReference type="ChEBI" id="CHEBI:57844"/>
        <note>ligand shared between two neighboring subunits</note>
    </ligand>
</feature>
<feature type="binding site" description="in other chain" evidence="1">
    <location>
        <position position="103"/>
    </location>
    <ligand>
        <name>L-methionine</name>
        <dbReference type="ChEBI" id="CHEBI:57844"/>
        <note>ligand shared between two neighboring subunits</note>
    </ligand>
</feature>
<feature type="binding site" description="in other chain" evidence="1">
    <location>
        <begin position="178"/>
        <end position="180"/>
    </location>
    <ligand>
        <name>ATP</name>
        <dbReference type="ChEBI" id="CHEBI:30616"/>
        <note>ligand shared between two neighboring subunits</note>
    </ligand>
</feature>
<feature type="binding site" description="in other chain" evidence="1">
    <location>
        <begin position="249"/>
        <end position="250"/>
    </location>
    <ligand>
        <name>ATP</name>
        <dbReference type="ChEBI" id="CHEBI:30616"/>
        <note>ligand shared between two neighboring subunits</note>
    </ligand>
</feature>
<feature type="binding site" evidence="1">
    <location>
        <position position="258"/>
    </location>
    <ligand>
        <name>ATP</name>
        <dbReference type="ChEBI" id="CHEBI:30616"/>
        <note>ligand shared between two neighboring subunits</note>
    </ligand>
</feature>
<feature type="binding site" evidence="1">
    <location>
        <position position="258"/>
    </location>
    <ligand>
        <name>L-methionine</name>
        <dbReference type="ChEBI" id="CHEBI:57844"/>
        <note>ligand shared between two neighboring subunits</note>
    </ligand>
</feature>
<feature type="binding site" description="in other chain" evidence="1">
    <location>
        <begin position="264"/>
        <end position="265"/>
    </location>
    <ligand>
        <name>ATP</name>
        <dbReference type="ChEBI" id="CHEBI:30616"/>
        <note>ligand shared between two neighboring subunits</note>
    </ligand>
</feature>
<feature type="binding site" evidence="1">
    <location>
        <position position="281"/>
    </location>
    <ligand>
        <name>ATP</name>
        <dbReference type="ChEBI" id="CHEBI:30616"/>
        <note>ligand shared between two neighboring subunits</note>
    </ligand>
</feature>
<feature type="binding site" evidence="1">
    <location>
        <position position="285"/>
    </location>
    <ligand>
        <name>ATP</name>
        <dbReference type="ChEBI" id="CHEBI:30616"/>
        <note>ligand shared between two neighboring subunits</note>
    </ligand>
</feature>
<feature type="binding site" description="in other chain" evidence="1">
    <location>
        <position position="289"/>
    </location>
    <ligand>
        <name>L-methionine</name>
        <dbReference type="ChEBI" id="CHEBI:57844"/>
        <note>ligand shared between two neighboring subunits</note>
    </ligand>
</feature>
<comment type="function">
    <text evidence="1">Catalyzes the formation of S-adenosylmethionine (AdoMet) from methionine and ATP. The overall synthetic reaction is composed of two sequential steps, AdoMet formation and the subsequent tripolyphosphate hydrolysis which occurs prior to release of AdoMet from the enzyme.</text>
</comment>
<comment type="catalytic activity">
    <reaction evidence="1">
        <text>L-methionine + ATP + H2O = S-adenosyl-L-methionine + phosphate + diphosphate</text>
        <dbReference type="Rhea" id="RHEA:21080"/>
        <dbReference type="ChEBI" id="CHEBI:15377"/>
        <dbReference type="ChEBI" id="CHEBI:30616"/>
        <dbReference type="ChEBI" id="CHEBI:33019"/>
        <dbReference type="ChEBI" id="CHEBI:43474"/>
        <dbReference type="ChEBI" id="CHEBI:57844"/>
        <dbReference type="ChEBI" id="CHEBI:59789"/>
        <dbReference type="EC" id="2.5.1.6"/>
    </reaction>
</comment>
<comment type="cofactor">
    <cofactor evidence="1">
        <name>Mg(2+)</name>
        <dbReference type="ChEBI" id="CHEBI:18420"/>
    </cofactor>
    <text evidence="1">Binds 2 divalent ions per subunit.</text>
</comment>
<comment type="cofactor">
    <cofactor evidence="1">
        <name>K(+)</name>
        <dbReference type="ChEBI" id="CHEBI:29103"/>
    </cofactor>
    <text evidence="1">Binds 1 potassium ion per subunit.</text>
</comment>
<comment type="pathway">
    <text evidence="1">Amino-acid biosynthesis; S-adenosyl-L-methionine biosynthesis; S-adenosyl-L-methionine from L-methionine: step 1/1.</text>
</comment>
<comment type="subunit">
    <text evidence="1">Homotetramer; dimer of dimers.</text>
</comment>
<comment type="subcellular location">
    <subcellularLocation>
        <location evidence="1">Cytoplasm</location>
    </subcellularLocation>
</comment>
<comment type="similarity">
    <text evidence="1">Belongs to the AdoMet synthase family.</text>
</comment>
<name>METK_MYCSK</name>
<evidence type="ECO:0000255" key="1">
    <source>
        <dbReference type="HAMAP-Rule" id="MF_00086"/>
    </source>
</evidence>
<proteinExistence type="inferred from homology"/>